<feature type="chain" id="PRO_0000260966" description="Large ribosomal subunit protein uL6">
    <location>
        <begin position="1"/>
        <end position="179"/>
    </location>
</feature>
<protein>
    <recommendedName>
        <fullName evidence="1">Large ribosomal subunit protein uL6</fullName>
    </recommendedName>
    <alternativeName>
        <fullName evidence="2">50S ribosomal protein L6</fullName>
    </alternativeName>
</protein>
<sequence>MSRIGKKPIELPANVTCERTGNAIKVAGPRGELTTIIPEKVEVVMDQTKVLVKRHSDSREDRSYHGLVRTLIQNMITGVSTGYEKSLEIVGVGFKAEAEGRNLKLTIGYSSPIIYAVPEGIDLKIEKATNIILSGIDKEKVGKVAAEIRRIKKPEPYKGKGIKYANEQVRRKVGKSVGA</sequence>
<gene>
    <name evidence="1" type="primary">rplF</name>
    <name type="ordered locus">SYNAS_03170</name>
    <name type="ORF">SYN_01590</name>
</gene>
<evidence type="ECO:0000255" key="1">
    <source>
        <dbReference type="HAMAP-Rule" id="MF_01365"/>
    </source>
</evidence>
<evidence type="ECO:0000305" key="2"/>
<name>RL6_SYNAS</name>
<proteinExistence type="inferred from homology"/>
<keyword id="KW-1185">Reference proteome</keyword>
<keyword id="KW-0687">Ribonucleoprotein</keyword>
<keyword id="KW-0689">Ribosomal protein</keyword>
<keyword id="KW-0694">RNA-binding</keyword>
<keyword id="KW-0699">rRNA-binding</keyword>
<organism>
    <name type="scientific">Syntrophus aciditrophicus (strain SB)</name>
    <dbReference type="NCBI Taxonomy" id="56780"/>
    <lineage>
        <taxon>Bacteria</taxon>
        <taxon>Pseudomonadati</taxon>
        <taxon>Thermodesulfobacteriota</taxon>
        <taxon>Syntrophia</taxon>
        <taxon>Syntrophales</taxon>
        <taxon>Syntrophaceae</taxon>
        <taxon>Syntrophus</taxon>
    </lineage>
</organism>
<dbReference type="EMBL" id="CP000252">
    <property type="protein sequence ID" value="ABC76196.1"/>
    <property type="molecule type" value="Genomic_DNA"/>
</dbReference>
<dbReference type="RefSeq" id="WP_011416230.1">
    <property type="nucleotide sequence ID" value="NC_007759.1"/>
</dbReference>
<dbReference type="SMR" id="Q2LQC2"/>
<dbReference type="FunCoup" id="Q2LQC2">
    <property type="interactions" value="568"/>
</dbReference>
<dbReference type="STRING" id="56780.SYN_01590"/>
<dbReference type="KEGG" id="sat:SYN_01590"/>
<dbReference type="eggNOG" id="COG0097">
    <property type="taxonomic scope" value="Bacteria"/>
</dbReference>
<dbReference type="HOGENOM" id="CLU_065464_1_2_7"/>
<dbReference type="InParanoid" id="Q2LQC2"/>
<dbReference type="OrthoDB" id="9805007at2"/>
<dbReference type="Proteomes" id="UP000001933">
    <property type="component" value="Chromosome"/>
</dbReference>
<dbReference type="GO" id="GO:0022625">
    <property type="term" value="C:cytosolic large ribosomal subunit"/>
    <property type="evidence" value="ECO:0007669"/>
    <property type="project" value="TreeGrafter"/>
</dbReference>
<dbReference type="GO" id="GO:0019843">
    <property type="term" value="F:rRNA binding"/>
    <property type="evidence" value="ECO:0007669"/>
    <property type="project" value="UniProtKB-UniRule"/>
</dbReference>
<dbReference type="GO" id="GO:0003735">
    <property type="term" value="F:structural constituent of ribosome"/>
    <property type="evidence" value="ECO:0007669"/>
    <property type="project" value="InterPro"/>
</dbReference>
<dbReference type="GO" id="GO:0002181">
    <property type="term" value="P:cytoplasmic translation"/>
    <property type="evidence" value="ECO:0007669"/>
    <property type="project" value="TreeGrafter"/>
</dbReference>
<dbReference type="FunFam" id="3.90.930.12:FF:000001">
    <property type="entry name" value="50S ribosomal protein L6"/>
    <property type="match status" value="1"/>
</dbReference>
<dbReference type="FunFam" id="3.90.930.12:FF:000002">
    <property type="entry name" value="50S ribosomal protein L6"/>
    <property type="match status" value="1"/>
</dbReference>
<dbReference type="Gene3D" id="3.90.930.12">
    <property type="entry name" value="Ribosomal protein L6, alpha-beta domain"/>
    <property type="match status" value="2"/>
</dbReference>
<dbReference type="HAMAP" id="MF_01365_B">
    <property type="entry name" value="Ribosomal_uL6_B"/>
    <property type="match status" value="1"/>
</dbReference>
<dbReference type="InterPro" id="IPR000702">
    <property type="entry name" value="Ribosomal_uL6-like"/>
</dbReference>
<dbReference type="InterPro" id="IPR036789">
    <property type="entry name" value="Ribosomal_uL6-like_a/b-dom_sf"/>
</dbReference>
<dbReference type="InterPro" id="IPR020040">
    <property type="entry name" value="Ribosomal_uL6_a/b-dom"/>
</dbReference>
<dbReference type="InterPro" id="IPR019906">
    <property type="entry name" value="Ribosomal_uL6_bac-type"/>
</dbReference>
<dbReference type="InterPro" id="IPR002358">
    <property type="entry name" value="Ribosomal_uL6_CS"/>
</dbReference>
<dbReference type="NCBIfam" id="TIGR03654">
    <property type="entry name" value="L6_bact"/>
    <property type="match status" value="1"/>
</dbReference>
<dbReference type="PANTHER" id="PTHR11655">
    <property type="entry name" value="60S/50S RIBOSOMAL PROTEIN L6/L9"/>
    <property type="match status" value="1"/>
</dbReference>
<dbReference type="PANTHER" id="PTHR11655:SF14">
    <property type="entry name" value="LARGE RIBOSOMAL SUBUNIT PROTEIN UL6M"/>
    <property type="match status" value="1"/>
</dbReference>
<dbReference type="Pfam" id="PF00347">
    <property type="entry name" value="Ribosomal_L6"/>
    <property type="match status" value="2"/>
</dbReference>
<dbReference type="PIRSF" id="PIRSF002162">
    <property type="entry name" value="Ribosomal_L6"/>
    <property type="match status" value="1"/>
</dbReference>
<dbReference type="PRINTS" id="PR00059">
    <property type="entry name" value="RIBOSOMALL6"/>
</dbReference>
<dbReference type="SUPFAM" id="SSF56053">
    <property type="entry name" value="Ribosomal protein L6"/>
    <property type="match status" value="2"/>
</dbReference>
<dbReference type="PROSITE" id="PS00525">
    <property type="entry name" value="RIBOSOMAL_L6_1"/>
    <property type="match status" value="1"/>
</dbReference>
<comment type="function">
    <text evidence="1">This protein binds to the 23S rRNA, and is important in its secondary structure. It is located near the subunit interface in the base of the L7/L12 stalk, and near the tRNA binding site of the peptidyltransferase center.</text>
</comment>
<comment type="subunit">
    <text evidence="1">Part of the 50S ribosomal subunit.</text>
</comment>
<comment type="similarity">
    <text evidence="1">Belongs to the universal ribosomal protein uL6 family.</text>
</comment>
<reference key="1">
    <citation type="journal article" date="2007" name="Proc. Natl. Acad. Sci. U.S.A.">
        <title>The genome of Syntrophus aciditrophicus: life at the thermodynamic limit of microbial growth.</title>
        <authorList>
            <person name="McInerney M.J."/>
            <person name="Rohlin L."/>
            <person name="Mouttaki H."/>
            <person name="Kim U."/>
            <person name="Krupp R.S."/>
            <person name="Rios-Hernandez L."/>
            <person name="Sieber J."/>
            <person name="Struchtemeyer C.G."/>
            <person name="Bhattacharyya A."/>
            <person name="Campbell J.W."/>
            <person name="Gunsalus R.P."/>
        </authorList>
    </citation>
    <scope>NUCLEOTIDE SEQUENCE [LARGE SCALE GENOMIC DNA]</scope>
    <source>
        <strain>SB</strain>
    </source>
</reference>
<accession>Q2LQC2</accession>